<comment type="function">
    <text evidence="1">Catalyzes the excretion of spermidine.</text>
</comment>
<comment type="subunit">
    <text evidence="1">Forms a complex with MdtJ.</text>
</comment>
<comment type="subcellular location">
    <subcellularLocation>
        <location evidence="1">Cell inner membrane</location>
        <topology evidence="1">Multi-pass membrane protein</topology>
    </subcellularLocation>
</comment>
<comment type="similarity">
    <text evidence="1">Belongs to the drug/metabolite transporter (DMT) superfamily. Small multidrug resistance (SMR) (TC 2.A.7.1) family. MdtI subfamily.</text>
</comment>
<gene>
    <name evidence="1" type="primary">mdtI</name>
    <name type="ordered locus">SPAB_01830</name>
</gene>
<proteinExistence type="inferred from homology"/>
<name>MDTI_SALPB</name>
<accession>A9MZZ2</accession>
<organism>
    <name type="scientific">Salmonella paratyphi B (strain ATCC BAA-1250 / SPB7)</name>
    <dbReference type="NCBI Taxonomy" id="1016998"/>
    <lineage>
        <taxon>Bacteria</taxon>
        <taxon>Pseudomonadati</taxon>
        <taxon>Pseudomonadota</taxon>
        <taxon>Gammaproteobacteria</taxon>
        <taxon>Enterobacterales</taxon>
        <taxon>Enterobacteriaceae</taxon>
        <taxon>Salmonella</taxon>
    </lineage>
</organism>
<sequence length="109" mass="11686">MQQFEWIHGAWLGLAIMLEIAANVLLKFSDGFRRKCYGILSLAAVLAAFSALSQAVKGIDLSVAYALWGGFGIAATLAAGWVLFGQRLNPKGWVGVILLLAGMVMIKFA</sequence>
<protein>
    <recommendedName>
        <fullName evidence="1">Spermidine export protein MdtI</fullName>
    </recommendedName>
</protein>
<feature type="chain" id="PRO_0000331147" description="Spermidine export protein MdtI">
    <location>
        <begin position="1"/>
        <end position="109"/>
    </location>
</feature>
<feature type="transmembrane region" description="Helical" evidence="1">
    <location>
        <begin position="6"/>
        <end position="26"/>
    </location>
</feature>
<feature type="transmembrane region" description="Helical" evidence="1">
    <location>
        <begin position="36"/>
        <end position="56"/>
    </location>
</feature>
<feature type="transmembrane region" description="Helical" evidence="1">
    <location>
        <begin position="64"/>
        <end position="84"/>
    </location>
</feature>
<feature type="transmembrane region" description="Helical" evidence="1">
    <location>
        <begin position="88"/>
        <end position="108"/>
    </location>
</feature>
<dbReference type="EMBL" id="CP000886">
    <property type="protein sequence ID" value="ABX67223.1"/>
    <property type="molecule type" value="Genomic_DNA"/>
</dbReference>
<dbReference type="RefSeq" id="WP_001183821.1">
    <property type="nucleotide sequence ID" value="NC_010102.1"/>
</dbReference>
<dbReference type="SMR" id="A9MZZ2"/>
<dbReference type="KEGG" id="spq:SPAB_01830"/>
<dbReference type="PATRIC" id="fig|1016998.12.peg.1725"/>
<dbReference type="HOGENOM" id="CLU_133067_0_4_6"/>
<dbReference type="BioCyc" id="SENT1016998:SPAB_RS07425-MONOMER"/>
<dbReference type="Proteomes" id="UP000008556">
    <property type="component" value="Chromosome"/>
</dbReference>
<dbReference type="GO" id="GO:0005886">
    <property type="term" value="C:plasma membrane"/>
    <property type="evidence" value="ECO:0007669"/>
    <property type="project" value="UniProtKB-SubCell"/>
</dbReference>
<dbReference type="GO" id="GO:0015199">
    <property type="term" value="F:amino-acid betaine transmembrane transporter activity"/>
    <property type="evidence" value="ECO:0007669"/>
    <property type="project" value="TreeGrafter"/>
</dbReference>
<dbReference type="GO" id="GO:0015297">
    <property type="term" value="F:antiporter activity"/>
    <property type="evidence" value="ECO:0007669"/>
    <property type="project" value="TreeGrafter"/>
</dbReference>
<dbReference type="GO" id="GO:0015220">
    <property type="term" value="F:choline transmembrane transporter activity"/>
    <property type="evidence" value="ECO:0007669"/>
    <property type="project" value="TreeGrafter"/>
</dbReference>
<dbReference type="GO" id="GO:0015606">
    <property type="term" value="F:spermidine transmembrane transporter activity"/>
    <property type="evidence" value="ECO:0007669"/>
    <property type="project" value="UniProtKB-UniRule"/>
</dbReference>
<dbReference type="GO" id="GO:0031460">
    <property type="term" value="P:glycine betaine transport"/>
    <property type="evidence" value="ECO:0007669"/>
    <property type="project" value="TreeGrafter"/>
</dbReference>
<dbReference type="FunFam" id="1.10.3730.20:FF:000001">
    <property type="entry name" value="Quaternary ammonium compound resistance transporter SugE"/>
    <property type="match status" value="1"/>
</dbReference>
<dbReference type="Gene3D" id="1.10.3730.20">
    <property type="match status" value="1"/>
</dbReference>
<dbReference type="HAMAP" id="MF_01597">
    <property type="entry name" value="MdtI"/>
    <property type="match status" value="1"/>
</dbReference>
<dbReference type="InterPro" id="IPR000390">
    <property type="entry name" value="Small_drug/metabolite_transptr"/>
</dbReference>
<dbReference type="InterPro" id="IPR045324">
    <property type="entry name" value="Small_multidrug_res"/>
</dbReference>
<dbReference type="InterPro" id="IPR023737">
    <property type="entry name" value="Spermidine_export_MdtI"/>
</dbReference>
<dbReference type="NCBIfam" id="NF007934">
    <property type="entry name" value="PRK10650.1"/>
    <property type="match status" value="1"/>
</dbReference>
<dbReference type="PANTHER" id="PTHR30561">
    <property type="entry name" value="SMR FAMILY PROTON-DEPENDENT DRUG EFFLUX TRANSPORTER SUGE"/>
    <property type="match status" value="1"/>
</dbReference>
<dbReference type="PANTHER" id="PTHR30561:SF6">
    <property type="entry name" value="SPERMIDINE EXPORT PROTEIN MDTI"/>
    <property type="match status" value="1"/>
</dbReference>
<dbReference type="Pfam" id="PF00893">
    <property type="entry name" value="Multi_Drug_Res"/>
    <property type="match status" value="1"/>
</dbReference>
<dbReference type="SUPFAM" id="SSF103481">
    <property type="entry name" value="Multidrug resistance efflux transporter EmrE"/>
    <property type="match status" value="1"/>
</dbReference>
<keyword id="KW-0997">Cell inner membrane</keyword>
<keyword id="KW-1003">Cell membrane</keyword>
<keyword id="KW-0472">Membrane</keyword>
<keyword id="KW-0812">Transmembrane</keyword>
<keyword id="KW-1133">Transmembrane helix</keyword>
<keyword id="KW-0813">Transport</keyword>
<reference key="1">
    <citation type="submission" date="2007-11" db="EMBL/GenBank/DDBJ databases">
        <authorList>
            <consortium name="The Salmonella enterica serovar Paratyphi B Genome Sequencing Project"/>
            <person name="McClelland M."/>
            <person name="Sanderson E.K."/>
            <person name="Porwollik S."/>
            <person name="Spieth J."/>
            <person name="Clifton W.S."/>
            <person name="Fulton R."/>
            <person name="Cordes M."/>
            <person name="Wollam A."/>
            <person name="Shah N."/>
            <person name="Pepin K."/>
            <person name="Bhonagiri V."/>
            <person name="Nash W."/>
            <person name="Johnson M."/>
            <person name="Thiruvilangam P."/>
            <person name="Wilson R."/>
        </authorList>
    </citation>
    <scope>NUCLEOTIDE SEQUENCE [LARGE SCALE GENOMIC DNA]</scope>
    <source>
        <strain>ATCC BAA-1250 / SPB7</strain>
    </source>
</reference>
<evidence type="ECO:0000255" key="1">
    <source>
        <dbReference type="HAMAP-Rule" id="MF_01597"/>
    </source>
</evidence>